<accession>B0XFT7</accession>
<gene>
    <name type="ORF">CPIJ018275</name>
    <name type="ORF">CPIJ018457</name>
</gene>
<evidence type="ECO:0000255" key="1">
    <source>
        <dbReference type="HAMAP-Rule" id="MF_03008"/>
    </source>
</evidence>
<reference key="1">
    <citation type="submission" date="2007-03" db="EMBL/GenBank/DDBJ databases">
        <title>Annotation of Culex pipiens quinquefasciatus.</title>
        <authorList>
            <consortium name="The Broad Institute Genome Sequencing Platform"/>
            <person name="Atkinson P.W."/>
            <person name="Hemingway J."/>
            <person name="Christensen B.M."/>
            <person name="Higgs S."/>
            <person name="Kodira C.D."/>
            <person name="Hannick L.I."/>
            <person name="Megy K."/>
            <person name="O'Leary S.B."/>
            <person name="Pearson M."/>
            <person name="Haas B.J."/>
            <person name="Mauceli E."/>
            <person name="Wortman J.R."/>
            <person name="Lee N.H."/>
            <person name="Guigo R."/>
            <person name="Stanke M."/>
            <person name="Alvarado L."/>
            <person name="Amedeo P."/>
            <person name="Antoine C.H."/>
            <person name="Arensburger P."/>
            <person name="Bidwell S.L."/>
            <person name="Crawford M."/>
            <person name="Camaro F."/>
            <person name="Devon K."/>
            <person name="Engels R."/>
            <person name="Hammond M."/>
            <person name="Howarth C."/>
            <person name="Koehrsen M."/>
            <person name="Lawson D."/>
            <person name="Montgomery P."/>
            <person name="Nene V."/>
            <person name="Nusbaum C."/>
            <person name="Puiu D."/>
            <person name="Romero-Severson J."/>
            <person name="Severson D.W."/>
            <person name="Shumway M."/>
            <person name="Sisk P."/>
            <person name="Stolte C."/>
            <person name="Zeng Q."/>
            <person name="Eisenstadt E."/>
            <person name="Fraser-Liggett C.M."/>
            <person name="Strausberg R."/>
            <person name="Galagan J."/>
            <person name="Birren B."/>
            <person name="Collins F.H."/>
        </authorList>
    </citation>
    <scope>NUCLEOTIDE SEQUENCE [LARGE SCALE GENOMIC DNA]</scope>
    <source>
        <strain>JHB</strain>
    </source>
</reference>
<organism>
    <name type="scientific">Culex quinquefasciatus</name>
    <name type="common">Southern house mosquito</name>
    <name type="synonym">Culex pungens</name>
    <dbReference type="NCBI Taxonomy" id="7176"/>
    <lineage>
        <taxon>Eukaryota</taxon>
        <taxon>Metazoa</taxon>
        <taxon>Ecdysozoa</taxon>
        <taxon>Arthropoda</taxon>
        <taxon>Hexapoda</taxon>
        <taxon>Insecta</taxon>
        <taxon>Pterygota</taxon>
        <taxon>Neoptera</taxon>
        <taxon>Endopterygota</taxon>
        <taxon>Diptera</taxon>
        <taxon>Nematocera</taxon>
        <taxon>Culicoidea</taxon>
        <taxon>Culicidae</taxon>
        <taxon>Culicinae</taxon>
        <taxon>Culicini</taxon>
        <taxon>Culex</taxon>
        <taxon>Culex</taxon>
    </lineage>
</organism>
<feature type="chain" id="PRO_0000365341" description="Eukaryotic translation initiation factor 3 subunit I">
    <location>
        <begin position="1"/>
        <end position="328"/>
    </location>
</feature>
<feature type="repeat" description="WD 1">
    <location>
        <begin position="8"/>
        <end position="47"/>
    </location>
</feature>
<feature type="repeat" description="WD 2">
    <location>
        <begin position="50"/>
        <end position="91"/>
    </location>
</feature>
<feature type="repeat" description="WD 3">
    <location>
        <begin position="148"/>
        <end position="187"/>
    </location>
</feature>
<feature type="repeat" description="WD 4">
    <location>
        <begin position="190"/>
        <end position="229"/>
    </location>
</feature>
<feature type="repeat" description="WD 5">
    <location>
        <begin position="287"/>
        <end position="328"/>
    </location>
</feature>
<comment type="function">
    <text evidence="1">Component of the eukaryotic translation initiation factor 3 (eIF-3) complex, which is involved in protein synthesis of a specialized repertoire of mRNAs and, together with other initiation factors, stimulates binding of mRNA and methionyl-tRNAi to the 40S ribosome. The eIF-3 complex specifically targets and initiates translation of a subset of mRNAs involved in cell proliferation.</text>
</comment>
<comment type="subunit">
    <text evidence="1">Component of the eukaryotic translation initiation factor 3 (eIF-3) complex.</text>
</comment>
<comment type="subcellular location">
    <subcellularLocation>
        <location evidence="1">Cytoplasm</location>
    </subcellularLocation>
</comment>
<comment type="similarity">
    <text evidence="1">Belongs to the eIF-3 subunit I family.</text>
</comment>
<protein>
    <recommendedName>
        <fullName evidence="1">Eukaryotic translation initiation factor 3 subunit I</fullName>
        <shortName evidence="1">eIF3i</shortName>
    </recommendedName>
</protein>
<keyword id="KW-0963">Cytoplasm</keyword>
<keyword id="KW-0396">Initiation factor</keyword>
<keyword id="KW-0648">Protein biosynthesis</keyword>
<keyword id="KW-1185">Reference proteome</keyword>
<keyword id="KW-0677">Repeat</keyword>
<keyword id="KW-0853">WD repeat</keyword>
<name>EIF3I_CULQU</name>
<dbReference type="EMBL" id="DS232960">
    <property type="protein sequence ID" value="EDS27016.1"/>
    <property type="molecule type" value="Genomic_DNA"/>
</dbReference>
<dbReference type="EMBL" id="DS233035">
    <property type="protein sequence ID" value="EDS27653.1"/>
    <property type="molecule type" value="Genomic_DNA"/>
</dbReference>
<dbReference type="RefSeq" id="XP_001868509.1">
    <property type="nucleotide sequence ID" value="XM_001868474.1"/>
</dbReference>
<dbReference type="SMR" id="B0XFT7"/>
<dbReference type="FunCoup" id="B0XFT7">
    <property type="interactions" value="1563"/>
</dbReference>
<dbReference type="STRING" id="7176.B0XFT7"/>
<dbReference type="EnsemblMetazoa" id="CPIJ018275-RA">
    <property type="protein sequence ID" value="CPIJ018275-PA"/>
    <property type="gene ID" value="CPIJ018275"/>
</dbReference>
<dbReference type="EnsemblMetazoa" id="CPIJ018457-RA">
    <property type="protein sequence ID" value="CPIJ018457-PA"/>
    <property type="gene ID" value="CPIJ018457"/>
</dbReference>
<dbReference type="EnsemblMetazoa" id="CQUJHB007268.R11190">
    <property type="protein sequence ID" value="CQUJHB007268.P11190"/>
    <property type="gene ID" value="CQUJHB007268"/>
</dbReference>
<dbReference type="EnsemblMetazoa" id="XM_001868726.2">
    <property type="protein sequence ID" value="XP_001868761.1"/>
    <property type="gene ID" value="LOC6052506"/>
</dbReference>
<dbReference type="GeneID" id="6052506"/>
<dbReference type="KEGG" id="cqu:CpipJ_CPIJ018275"/>
<dbReference type="KEGG" id="cqu:CpipJ_CPIJ018457"/>
<dbReference type="CTD" id="8668"/>
<dbReference type="VEuPathDB" id="VectorBase:CPIJ018275"/>
<dbReference type="VEuPathDB" id="VectorBase:CPIJ018457"/>
<dbReference type="VEuPathDB" id="VectorBase:CQUJHB007268"/>
<dbReference type="eggNOG" id="KOG0643">
    <property type="taxonomic scope" value="Eukaryota"/>
</dbReference>
<dbReference type="HOGENOM" id="CLU_043845_0_1_1"/>
<dbReference type="InParanoid" id="B0XFT7"/>
<dbReference type="OMA" id="VWFSHNG"/>
<dbReference type="OrthoDB" id="24966at2759"/>
<dbReference type="PhylomeDB" id="B0XFT7"/>
<dbReference type="Proteomes" id="UP000002320">
    <property type="component" value="Unassembled WGS sequence"/>
</dbReference>
<dbReference type="GO" id="GO:0016282">
    <property type="term" value="C:eukaryotic 43S preinitiation complex"/>
    <property type="evidence" value="ECO:0007669"/>
    <property type="project" value="UniProtKB-UniRule"/>
</dbReference>
<dbReference type="GO" id="GO:0033290">
    <property type="term" value="C:eukaryotic 48S preinitiation complex"/>
    <property type="evidence" value="ECO:0007669"/>
    <property type="project" value="UniProtKB-UniRule"/>
</dbReference>
<dbReference type="GO" id="GO:0071541">
    <property type="term" value="C:eukaryotic translation initiation factor 3 complex, eIF3m"/>
    <property type="evidence" value="ECO:0007669"/>
    <property type="project" value="TreeGrafter"/>
</dbReference>
<dbReference type="GO" id="GO:0003723">
    <property type="term" value="F:RNA binding"/>
    <property type="evidence" value="ECO:0007669"/>
    <property type="project" value="TreeGrafter"/>
</dbReference>
<dbReference type="GO" id="GO:0003743">
    <property type="term" value="F:translation initiation factor activity"/>
    <property type="evidence" value="ECO:0007669"/>
    <property type="project" value="UniProtKB-UniRule"/>
</dbReference>
<dbReference type="GO" id="GO:0001732">
    <property type="term" value="P:formation of cytoplasmic translation initiation complex"/>
    <property type="evidence" value="ECO:0007669"/>
    <property type="project" value="UniProtKB-UniRule"/>
</dbReference>
<dbReference type="FunFam" id="2.130.10.10:FF:000127">
    <property type="entry name" value="Eukaryotic translation initiation factor 3 subunit I"/>
    <property type="match status" value="1"/>
</dbReference>
<dbReference type="Gene3D" id="2.130.10.10">
    <property type="entry name" value="YVTN repeat-like/Quinoprotein amine dehydrogenase"/>
    <property type="match status" value="1"/>
</dbReference>
<dbReference type="HAMAP" id="MF_03008">
    <property type="entry name" value="eIF3i"/>
    <property type="match status" value="1"/>
</dbReference>
<dbReference type="InterPro" id="IPR027525">
    <property type="entry name" value="eIF3i"/>
</dbReference>
<dbReference type="InterPro" id="IPR015943">
    <property type="entry name" value="WD40/YVTN_repeat-like_dom_sf"/>
</dbReference>
<dbReference type="InterPro" id="IPR019775">
    <property type="entry name" value="WD40_repeat_CS"/>
</dbReference>
<dbReference type="InterPro" id="IPR036322">
    <property type="entry name" value="WD40_repeat_dom_sf"/>
</dbReference>
<dbReference type="InterPro" id="IPR001680">
    <property type="entry name" value="WD40_rpt"/>
</dbReference>
<dbReference type="PANTHER" id="PTHR19877">
    <property type="entry name" value="EUKARYOTIC TRANSLATION INITIATION FACTOR 3 SUBUNIT I"/>
    <property type="match status" value="1"/>
</dbReference>
<dbReference type="PANTHER" id="PTHR19877:SF1">
    <property type="entry name" value="EUKARYOTIC TRANSLATION INITIATION FACTOR 3 SUBUNIT I"/>
    <property type="match status" value="1"/>
</dbReference>
<dbReference type="Pfam" id="PF24805">
    <property type="entry name" value="EIF3I"/>
    <property type="match status" value="1"/>
</dbReference>
<dbReference type="SMART" id="SM00320">
    <property type="entry name" value="WD40"/>
    <property type="match status" value="6"/>
</dbReference>
<dbReference type="SUPFAM" id="SSF50978">
    <property type="entry name" value="WD40 repeat-like"/>
    <property type="match status" value="1"/>
</dbReference>
<dbReference type="PROSITE" id="PS00678">
    <property type="entry name" value="WD_REPEATS_1"/>
    <property type="match status" value="2"/>
</dbReference>
<dbReference type="PROSITE" id="PS50082">
    <property type="entry name" value="WD_REPEATS_2"/>
    <property type="match status" value="5"/>
</dbReference>
<dbReference type="PROSITE" id="PS50294">
    <property type="entry name" value="WD_REPEATS_REGION"/>
    <property type="match status" value="2"/>
</dbReference>
<sequence>MKPLMLQGHERAITQIKYNREGDLIFSTAKDHKPSVWFSLNGERLGTYNGHQGAVWCVDVDWTTTRLITGAGDMSTKLWDVETGSVLGTIPCNSAARTANFSFSGNQASYSTDKAMGHNSELFIIDVRNVDSSISSQSPVLKLTMNQSIQTKITSMLWGALDETVITGHENGSIRIWDLRTAKELNSVNDHTGVINDMQLSADGTMLVSASKDTTAKLFDSESLMCLKTYKTERPVNSAAISPIHEHVVLGGGQEAMEVTTTSTKSGKFDSRLFHLVYEEEFARVKGHFGPINSLAFHPDGKSYATGGEDGFVRVQVFDASYYEFVFE</sequence>
<proteinExistence type="inferred from homology"/>